<gene>
    <name evidence="1" type="primary">rpmE2</name>
    <name type="ordered locus">PC1_1068</name>
</gene>
<sequence length="82" mass="9429">MKAGIHPDYRTVVFHDTSADVYYRTGSTIKTDRTIELEGTSYPYVTIDVSSASHPYYTGKQKEYSKEGSTARFQQRFGNFFK</sequence>
<keyword id="KW-0687">Ribonucleoprotein</keyword>
<keyword id="KW-0689">Ribosomal protein</keyword>
<name>RL31B_PECCP</name>
<accession>C6DB75</accession>
<dbReference type="EMBL" id="CP001657">
    <property type="protein sequence ID" value="ACT12117.1"/>
    <property type="molecule type" value="Genomic_DNA"/>
</dbReference>
<dbReference type="RefSeq" id="WP_015839361.1">
    <property type="nucleotide sequence ID" value="NC_012917.1"/>
</dbReference>
<dbReference type="SMR" id="C6DB75"/>
<dbReference type="STRING" id="561230.PC1_1068"/>
<dbReference type="KEGG" id="pct:PC1_1068"/>
<dbReference type="eggNOG" id="COG0254">
    <property type="taxonomic scope" value="Bacteria"/>
</dbReference>
<dbReference type="HOGENOM" id="CLU_114306_2_1_6"/>
<dbReference type="OrthoDB" id="9803251at2"/>
<dbReference type="Proteomes" id="UP000002736">
    <property type="component" value="Chromosome"/>
</dbReference>
<dbReference type="GO" id="GO:1990904">
    <property type="term" value="C:ribonucleoprotein complex"/>
    <property type="evidence" value="ECO:0007669"/>
    <property type="project" value="UniProtKB-KW"/>
</dbReference>
<dbReference type="GO" id="GO:0005840">
    <property type="term" value="C:ribosome"/>
    <property type="evidence" value="ECO:0007669"/>
    <property type="project" value="UniProtKB-KW"/>
</dbReference>
<dbReference type="GO" id="GO:0003735">
    <property type="term" value="F:structural constituent of ribosome"/>
    <property type="evidence" value="ECO:0007669"/>
    <property type="project" value="InterPro"/>
</dbReference>
<dbReference type="GO" id="GO:0006412">
    <property type="term" value="P:translation"/>
    <property type="evidence" value="ECO:0007669"/>
    <property type="project" value="UniProtKB-UniRule"/>
</dbReference>
<dbReference type="Gene3D" id="4.10.830.30">
    <property type="entry name" value="Ribosomal protein L31"/>
    <property type="match status" value="1"/>
</dbReference>
<dbReference type="HAMAP" id="MF_00502">
    <property type="entry name" value="Ribosomal_bL31_2"/>
    <property type="match status" value="1"/>
</dbReference>
<dbReference type="InterPro" id="IPR034704">
    <property type="entry name" value="Ribosomal_bL28/bL31-like_sf"/>
</dbReference>
<dbReference type="InterPro" id="IPR002150">
    <property type="entry name" value="Ribosomal_bL31"/>
</dbReference>
<dbReference type="InterPro" id="IPR027493">
    <property type="entry name" value="Ribosomal_bL31_B"/>
</dbReference>
<dbReference type="InterPro" id="IPR042105">
    <property type="entry name" value="Ribosomal_bL31_sf"/>
</dbReference>
<dbReference type="NCBIfam" id="TIGR00105">
    <property type="entry name" value="L31"/>
    <property type="match status" value="1"/>
</dbReference>
<dbReference type="NCBIfam" id="NF002462">
    <property type="entry name" value="PRK01678.1"/>
    <property type="match status" value="1"/>
</dbReference>
<dbReference type="PANTHER" id="PTHR33280">
    <property type="entry name" value="50S RIBOSOMAL PROTEIN L31, CHLOROPLASTIC"/>
    <property type="match status" value="1"/>
</dbReference>
<dbReference type="PANTHER" id="PTHR33280:SF1">
    <property type="entry name" value="LARGE RIBOSOMAL SUBUNIT PROTEIN BL31C"/>
    <property type="match status" value="1"/>
</dbReference>
<dbReference type="Pfam" id="PF01197">
    <property type="entry name" value="Ribosomal_L31"/>
    <property type="match status" value="1"/>
</dbReference>
<dbReference type="PRINTS" id="PR01249">
    <property type="entry name" value="RIBOSOMALL31"/>
</dbReference>
<dbReference type="SUPFAM" id="SSF143800">
    <property type="entry name" value="L28p-like"/>
    <property type="match status" value="1"/>
</dbReference>
<proteinExistence type="inferred from homology"/>
<protein>
    <recommendedName>
        <fullName evidence="1">Large ribosomal subunit protein bL31B</fullName>
    </recommendedName>
    <alternativeName>
        <fullName evidence="2">50S ribosomal protein L31 type B</fullName>
    </alternativeName>
</protein>
<comment type="subunit">
    <text evidence="1">Part of the 50S ribosomal subunit.</text>
</comment>
<comment type="similarity">
    <text evidence="1">Belongs to the bacterial ribosomal protein bL31 family. Type B subfamily.</text>
</comment>
<evidence type="ECO:0000255" key="1">
    <source>
        <dbReference type="HAMAP-Rule" id="MF_00502"/>
    </source>
</evidence>
<evidence type="ECO:0000305" key="2"/>
<feature type="chain" id="PRO_1000206534" description="Large ribosomal subunit protein bL31B">
    <location>
        <begin position="1"/>
        <end position="82"/>
    </location>
</feature>
<organism>
    <name type="scientific">Pectobacterium carotovorum subsp. carotovorum (strain PC1)</name>
    <dbReference type="NCBI Taxonomy" id="561230"/>
    <lineage>
        <taxon>Bacteria</taxon>
        <taxon>Pseudomonadati</taxon>
        <taxon>Pseudomonadota</taxon>
        <taxon>Gammaproteobacteria</taxon>
        <taxon>Enterobacterales</taxon>
        <taxon>Pectobacteriaceae</taxon>
        <taxon>Pectobacterium</taxon>
    </lineage>
</organism>
<reference key="1">
    <citation type="submission" date="2009-07" db="EMBL/GenBank/DDBJ databases">
        <title>Complete sequence of Pectobacterium carotovorum subsp. carotovorum PC1.</title>
        <authorList>
            <consortium name="US DOE Joint Genome Institute"/>
            <person name="Lucas S."/>
            <person name="Copeland A."/>
            <person name="Lapidus A."/>
            <person name="Glavina del Rio T."/>
            <person name="Tice H."/>
            <person name="Bruce D."/>
            <person name="Goodwin L."/>
            <person name="Pitluck S."/>
            <person name="Munk A.C."/>
            <person name="Brettin T."/>
            <person name="Detter J.C."/>
            <person name="Han C."/>
            <person name="Tapia R."/>
            <person name="Larimer F."/>
            <person name="Land M."/>
            <person name="Hauser L."/>
            <person name="Kyrpides N."/>
            <person name="Mikhailova N."/>
            <person name="Balakrishnan V."/>
            <person name="Glasner J."/>
            <person name="Perna N.T."/>
        </authorList>
    </citation>
    <scope>NUCLEOTIDE SEQUENCE [LARGE SCALE GENOMIC DNA]</scope>
    <source>
        <strain>PC1</strain>
    </source>
</reference>